<evidence type="ECO:0000255" key="1">
    <source>
        <dbReference type="HAMAP-Rule" id="MF_01502"/>
    </source>
</evidence>
<sequence>MSIKYSNKINKIRTFALSLVFIGLFIAYLGVFFRENIIIMTTFMMVGFLAVIASTVVYFWIGMLSTKTVQIICPSCDKPTKMLGRVDACMHCNQPLTMDRNLEGKEFDEKYNKKSYKS</sequence>
<keyword id="KW-1003">Cell membrane</keyword>
<keyword id="KW-0472">Membrane</keyword>
<keyword id="KW-0812">Transmembrane</keyword>
<keyword id="KW-1133">Transmembrane helix</keyword>
<proteinExistence type="inferred from homology"/>
<organism>
    <name type="scientific">Bacillus thuringiensis subsp. konkukian (strain 97-27)</name>
    <dbReference type="NCBI Taxonomy" id="281309"/>
    <lineage>
        <taxon>Bacteria</taxon>
        <taxon>Bacillati</taxon>
        <taxon>Bacillota</taxon>
        <taxon>Bacilli</taxon>
        <taxon>Bacillales</taxon>
        <taxon>Bacillaceae</taxon>
        <taxon>Bacillus</taxon>
        <taxon>Bacillus cereus group</taxon>
    </lineage>
</organism>
<gene>
    <name type="ordered locus">BT9727_0449</name>
</gene>
<comment type="subcellular location">
    <subcellularLocation>
        <location evidence="1">Cell membrane</location>
        <topology evidence="1">Multi-pass membrane protein</topology>
    </subcellularLocation>
</comment>
<comment type="similarity">
    <text evidence="1">Belongs to the UPF0295 family.</text>
</comment>
<feature type="chain" id="PRO_0000053852" description="UPF0295 protein BT9727_0449">
    <location>
        <begin position="1"/>
        <end position="118"/>
    </location>
</feature>
<feature type="transmembrane region" description="Helical" evidence="1">
    <location>
        <begin position="12"/>
        <end position="32"/>
    </location>
</feature>
<feature type="transmembrane region" description="Helical" evidence="1">
    <location>
        <begin position="43"/>
        <end position="63"/>
    </location>
</feature>
<dbReference type="EMBL" id="AE017355">
    <property type="protein sequence ID" value="AAT62073.1"/>
    <property type="molecule type" value="Genomic_DNA"/>
</dbReference>
<dbReference type="RefSeq" id="WP_000025063.1">
    <property type="nucleotide sequence ID" value="NC_005957.1"/>
</dbReference>
<dbReference type="RefSeq" id="YP_034799.1">
    <property type="nucleotide sequence ID" value="NC_005957.1"/>
</dbReference>
<dbReference type="SMR" id="Q6HNS1"/>
<dbReference type="KEGG" id="btk:BT9727_0449"/>
<dbReference type="PATRIC" id="fig|281309.8.peg.479"/>
<dbReference type="HOGENOM" id="CLU_143991_0_0_9"/>
<dbReference type="Proteomes" id="UP000001301">
    <property type="component" value="Chromosome"/>
</dbReference>
<dbReference type="GO" id="GO:0005886">
    <property type="term" value="C:plasma membrane"/>
    <property type="evidence" value="ECO:0007669"/>
    <property type="project" value="UniProtKB-SubCell"/>
</dbReference>
<dbReference type="HAMAP" id="MF_01502">
    <property type="entry name" value="UPF0295"/>
    <property type="match status" value="1"/>
</dbReference>
<dbReference type="InterPro" id="IPR020912">
    <property type="entry name" value="UPF0295"/>
</dbReference>
<dbReference type="NCBIfam" id="NF002796">
    <property type="entry name" value="PRK02935.1"/>
    <property type="match status" value="1"/>
</dbReference>
<dbReference type="Pfam" id="PF11023">
    <property type="entry name" value="DUF2614"/>
    <property type="match status" value="1"/>
</dbReference>
<protein>
    <recommendedName>
        <fullName evidence="1">UPF0295 protein BT9727_0449</fullName>
    </recommendedName>
</protein>
<name>Y449_BACHK</name>
<accession>Q6HNS1</accession>
<reference key="1">
    <citation type="journal article" date="2006" name="J. Bacteriol.">
        <title>Pathogenomic sequence analysis of Bacillus cereus and Bacillus thuringiensis isolates closely related to Bacillus anthracis.</title>
        <authorList>
            <person name="Han C.S."/>
            <person name="Xie G."/>
            <person name="Challacombe J.F."/>
            <person name="Altherr M.R."/>
            <person name="Bhotika S.S."/>
            <person name="Bruce D."/>
            <person name="Campbell C.S."/>
            <person name="Campbell M.L."/>
            <person name="Chen J."/>
            <person name="Chertkov O."/>
            <person name="Cleland C."/>
            <person name="Dimitrijevic M."/>
            <person name="Doggett N.A."/>
            <person name="Fawcett J.J."/>
            <person name="Glavina T."/>
            <person name="Goodwin L.A."/>
            <person name="Hill K.K."/>
            <person name="Hitchcock P."/>
            <person name="Jackson P.J."/>
            <person name="Keim P."/>
            <person name="Kewalramani A.R."/>
            <person name="Longmire J."/>
            <person name="Lucas S."/>
            <person name="Malfatti S."/>
            <person name="McMurry K."/>
            <person name="Meincke L.J."/>
            <person name="Misra M."/>
            <person name="Moseman B.L."/>
            <person name="Mundt M."/>
            <person name="Munk A.C."/>
            <person name="Okinaka R.T."/>
            <person name="Parson-Quintana B."/>
            <person name="Reilly L.P."/>
            <person name="Richardson P."/>
            <person name="Robinson D.L."/>
            <person name="Rubin E."/>
            <person name="Saunders E."/>
            <person name="Tapia R."/>
            <person name="Tesmer J.G."/>
            <person name="Thayer N."/>
            <person name="Thompson L.S."/>
            <person name="Tice H."/>
            <person name="Ticknor L.O."/>
            <person name="Wills P.L."/>
            <person name="Brettin T.S."/>
            <person name="Gilna P."/>
        </authorList>
    </citation>
    <scope>NUCLEOTIDE SEQUENCE [LARGE SCALE GENOMIC DNA]</scope>
    <source>
        <strain>97-27</strain>
    </source>
</reference>